<name>FIXX_SALTY</name>
<proteinExistence type="inferred from homology"/>
<sequence>MTSPVNVDVKLGVNKFNVDEDSPHIILKTDPDKQALEVLIKACPAGLYKKQDDGSVRFDYAGCLECGTCRILGLDTALEKWEYPRGTFGVEFRYG</sequence>
<feature type="chain" id="PRO_0000159216" description="Ferredoxin-like protein FixX">
    <location>
        <begin position="1"/>
        <end position="95"/>
    </location>
</feature>
<evidence type="ECO:0000250" key="1"/>
<evidence type="ECO:0000305" key="2"/>
<reference key="1">
    <citation type="journal article" date="2001" name="Nature">
        <title>Complete genome sequence of Salmonella enterica serovar Typhimurium LT2.</title>
        <authorList>
            <person name="McClelland M."/>
            <person name="Sanderson K.E."/>
            <person name="Spieth J."/>
            <person name="Clifton S.W."/>
            <person name="Latreille P."/>
            <person name="Courtney L."/>
            <person name="Porwollik S."/>
            <person name="Ali J."/>
            <person name="Dante M."/>
            <person name="Du F."/>
            <person name="Hou S."/>
            <person name="Layman D."/>
            <person name="Leonard S."/>
            <person name="Nguyen C."/>
            <person name="Scott K."/>
            <person name="Holmes A."/>
            <person name="Grewal N."/>
            <person name="Mulvaney E."/>
            <person name="Ryan E."/>
            <person name="Sun H."/>
            <person name="Florea L."/>
            <person name="Miller W."/>
            <person name="Stoneking T."/>
            <person name="Nhan M."/>
            <person name="Waterston R."/>
            <person name="Wilson R.K."/>
        </authorList>
    </citation>
    <scope>NUCLEOTIDE SEQUENCE [LARGE SCALE GENOMIC DNA]</scope>
    <source>
        <strain>LT2 / SGSC1412 / ATCC 700720</strain>
    </source>
</reference>
<protein>
    <recommendedName>
        <fullName>Ferredoxin-like protein FixX</fullName>
    </recommendedName>
</protein>
<accession>Q8ZRW8</accession>
<gene>
    <name type="primary">fixX</name>
    <name type="ordered locus">STM0078</name>
</gene>
<organism>
    <name type="scientific">Salmonella typhimurium (strain LT2 / SGSC1412 / ATCC 700720)</name>
    <dbReference type="NCBI Taxonomy" id="99287"/>
    <lineage>
        <taxon>Bacteria</taxon>
        <taxon>Pseudomonadati</taxon>
        <taxon>Pseudomonadota</taxon>
        <taxon>Gammaproteobacteria</taxon>
        <taxon>Enterobacterales</taxon>
        <taxon>Enterobacteriaceae</taxon>
        <taxon>Salmonella</taxon>
    </lineage>
</organism>
<dbReference type="EMBL" id="AE006468">
    <property type="protein sequence ID" value="AAL19042.1"/>
    <property type="molecule type" value="Genomic_DNA"/>
</dbReference>
<dbReference type="RefSeq" id="NP_459083.1">
    <property type="nucleotide sequence ID" value="NC_003197.2"/>
</dbReference>
<dbReference type="RefSeq" id="WP_000203736.1">
    <property type="nucleotide sequence ID" value="NC_003197.2"/>
</dbReference>
<dbReference type="SMR" id="Q8ZRW8"/>
<dbReference type="STRING" id="99287.STM0078"/>
<dbReference type="PaxDb" id="99287-STM0078"/>
<dbReference type="GeneID" id="1251596"/>
<dbReference type="GeneID" id="87002775"/>
<dbReference type="KEGG" id="stm:STM0078"/>
<dbReference type="PATRIC" id="fig|99287.12.peg.81"/>
<dbReference type="HOGENOM" id="CLU_163428_1_0_6"/>
<dbReference type="OMA" id="YGILFKF"/>
<dbReference type="PhylomeDB" id="Q8ZRW8"/>
<dbReference type="BioCyc" id="SENT99287:STM0078-MONOMER"/>
<dbReference type="Proteomes" id="UP000001014">
    <property type="component" value="Chromosome"/>
</dbReference>
<dbReference type="GO" id="GO:0051539">
    <property type="term" value="F:4 iron, 4 sulfur cluster binding"/>
    <property type="evidence" value="ECO:0007669"/>
    <property type="project" value="UniProtKB-KW"/>
</dbReference>
<dbReference type="GO" id="GO:0005506">
    <property type="term" value="F:iron ion binding"/>
    <property type="evidence" value="ECO:0007669"/>
    <property type="project" value="InterPro"/>
</dbReference>
<dbReference type="Gene3D" id="3.30.70.20">
    <property type="match status" value="1"/>
</dbReference>
<dbReference type="InterPro" id="IPR012206">
    <property type="entry name" value="Fd_FixX"/>
</dbReference>
<dbReference type="NCBIfam" id="NF011993">
    <property type="entry name" value="PRK15449.1"/>
    <property type="match status" value="1"/>
</dbReference>
<dbReference type="PANTHER" id="PTHR43082">
    <property type="entry name" value="FERREDOXIN-LIKE"/>
    <property type="match status" value="1"/>
</dbReference>
<dbReference type="PANTHER" id="PTHR43082:SF1">
    <property type="entry name" value="FERREDOXIN-LIKE PROTEIN FIXX-RELATED"/>
    <property type="match status" value="1"/>
</dbReference>
<dbReference type="PIRSF" id="PIRSF036548">
    <property type="entry name" value="Fdx_FixX"/>
    <property type="match status" value="1"/>
</dbReference>
<dbReference type="SUPFAM" id="SSF54862">
    <property type="entry name" value="4Fe-4S ferredoxins"/>
    <property type="match status" value="1"/>
</dbReference>
<comment type="function">
    <text evidence="1">Could be part of an electron transfer system required for anaerobic carnitine reduction. Could be a 3Fe-4S cluster-containing protein (By similarity).</text>
</comment>
<comment type="similarity">
    <text evidence="2">Belongs to the bacterial-type ferredoxin family. FixX subfamily.</text>
</comment>
<keyword id="KW-0004">4Fe-4S</keyword>
<keyword id="KW-0249">Electron transport</keyword>
<keyword id="KW-0408">Iron</keyword>
<keyword id="KW-0411">Iron-sulfur</keyword>
<keyword id="KW-0479">Metal-binding</keyword>
<keyword id="KW-1185">Reference proteome</keyword>
<keyword id="KW-0813">Transport</keyword>